<name>GID8_BOVIN</name>
<reference key="1">
    <citation type="submission" date="2005-11" db="EMBL/GenBank/DDBJ databases">
        <authorList>
            <consortium name="NIH - Mammalian Gene Collection (MGC) project"/>
        </authorList>
    </citation>
    <scope>NUCLEOTIDE SEQUENCE [LARGE SCALE MRNA]</scope>
    <source>
        <strain>Crossbred X Angus</strain>
        <tissue>Liver</tissue>
    </source>
</reference>
<evidence type="ECO:0000250" key="1">
    <source>
        <dbReference type="UniProtKB" id="Q9D7M1"/>
    </source>
</evidence>
<evidence type="ECO:0000250" key="2">
    <source>
        <dbReference type="UniProtKB" id="Q9NWU2"/>
    </source>
</evidence>
<evidence type="ECO:0000255" key="3">
    <source>
        <dbReference type="PROSITE-ProRule" id="PRU00058"/>
    </source>
</evidence>
<evidence type="ECO:0000255" key="4">
    <source>
        <dbReference type="PROSITE-ProRule" id="PRU00126"/>
    </source>
</evidence>
<evidence type="ECO:0000305" key="5"/>
<sequence length="228" mass="26799">MSYTEKPDEITKDEWMEKLNNLHVQRADMNRLIMNYLVTEGFKEAAEKFRMESGIEPSVDLETLDERIKIREMILKGQIQEAIALINSLHPELLDTNRYLYFHLQQQHLIELIRQRETEAALEFAQTQLAEQGEESRECLTEMERTLALLAFDNPEDSPFGDLLNMMQRQKVWSEVNQAVLDYENRESTPKLAKLLKLLLWAQNELDQKKVKYPKMTDLSKGVIEEPK</sequence>
<keyword id="KW-0963">Cytoplasm</keyword>
<keyword id="KW-0539">Nucleus</keyword>
<keyword id="KW-1185">Reference proteome</keyword>
<keyword id="KW-0832">Ubl conjugation</keyword>
<keyword id="KW-0879">Wnt signaling pathway</keyword>
<feature type="chain" id="PRO_0000328503" description="Glucose-induced degradation protein 8 homolog">
    <location>
        <begin position="1"/>
        <end position="228"/>
    </location>
</feature>
<feature type="domain" description="LisH" evidence="4">
    <location>
        <begin position="25"/>
        <end position="57"/>
    </location>
</feature>
<feature type="domain" description="CTLH" evidence="3">
    <location>
        <begin position="63"/>
        <end position="120"/>
    </location>
</feature>
<feature type="region of interest" description="Interaction with CTNNB1" evidence="2">
    <location>
        <begin position="116"/>
        <end position="212"/>
    </location>
</feature>
<protein>
    <recommendedName>
        <fullName>Glucose-induced degradation protein 8 homolog</fullName>
    </recommendedName>
</protein>
<gene>
    <name type="primary">GID8</name>
</gene>
<comment type="function">
    <text evidence="2">Core component of the CTLH E3 ubiquitin-protein ligase complex that selectively accepts ubiquitin from UBE2H and mediates ubiquitination and subsequent proteasomal degradation of the transcription factor HBP1. Acts as a positive regulator of Wnt signaling pathway by promoting beta-catenin (CTNNB1) nuclear accumulation.</text>
</comment>
<comment type="subunit">
    <text evidence="1 2">Homodimer; may also form higher oligomers (By similarity). Identified in the CTLH complex that contains GID4, RANBP9 and/or RANBP10, MKLN1, MAEA, RMND5A (or alternatively its paralog RMND5B), GID8, ARMC8, WDR26 and YPEL5. Within this complex, MAEA, RMND5A (or alternatively its paralog RMND5B), GID8, WDR26, and RANBP9 and/or RANBP10 form the catalytic core, while GID4, MKLN1, ARMC8 and YPEL5 have ancillary roles. Interacts with RANBP9. Part of a complex consisting of RANBP9, MKLN1 and GID8. Interacts with CTNNB1, AXIN1 and GSK3B (By similarity).</text>
</comment>
<comment type="subcellular location">
    <subcellularLocation>
        <location evidence="2">Cytoplasm</location>
    </subcellularLocation>
    <subcellularLocation>
        <location evidence="2">Nucleus</location>
    </subcellularLocation>
    <text evidence="2">Localizes in the cytoplasm in the absence of Wnt stimulation and in the nucleus in the presence of Wnt stimulation.</text>
</comment>
<comment type="PTM">
    <text evidence="2">Polyubiquitinated through 'Lys-48'-polyubiquitin chains, leading to proteasomal degradation in the absence of Wnt stimulation.</text>
</comment>
<comment type="similarity">
    <text evidence="5">Belongs to the GID8 family.</text>
</comment>
<organism>
    <name type="scientific">Bos taurus</name>
    <name type="common">Bovine</name>
    <dbReference type="NCBI Taxonomy" id="9913"/>
    <lineage>
        <taxon>Eukaryota</taxon>
        <taxon>Metazoa</taxon>
        <taxon>Chordata</taxon>
        <taxon>Craniata</taxon>
        <taxon>Vertebrata</taxon>
        <taxon>Euteleostomi</taxon>
        <taxon>Mammalia</taxon>
        <taxon>Eutheria</taxon>
        <taxon>Laurasiatheria</taxon>
        <taxon>Artiodactyla</taxon>
        <taxon>Ruminantia</taxon>
        <taxon>Pecora</taxon>
        <taxon>Bovidae</taxon>
        <taxon>Bovinae</taxon>
        <taxon>Bos</taxon>
    </lineage>
</organism>
<dbReference type="EMBL" id="BC109762">
    <property type="protein sequence ID" value="AAI09763.1"/>
    <property type="molecule type" value="mRNA"/>
</dbReference>
<dbReference type="RefSeq" id="NP_001032676.1">
    <property type="nucleotide sequence ID" value="NM_001037587.2"/>
</dbReference>
<dbReference type="RefSeq" id="XP_005214613.1">
    <property type="nucleotide sequence ID" value="XM_005214556.4"/>
</dbReference>
<dbReference type="RefSeq" id="XP_015329616.1">
    <property type="nucleotide sequence ID" value="XM_015474130.1"/>
</dbReference>
<dbReference type="RefSeq" id="XP_059748436.1">
    <property type="nucleotide sequence ID" value="XM_059892453.1"/>
</dbReference>
<dbReference type="SMR" id="Q32L52"/>
<dbReference type="BioGRID" id="162217">
    <property type="interactions" value="1"/>
</dbReference>
<dbReference type="FunCoup" id="Q32L52">
    <property type="interactions" value="4749"/>
</dbReference>
<dbReference type="STRING" id="9913.ENSBTAP00000002387"/>
<dbReference type="PaxDb" id="9913-ENSBTAP00000002387"/>
<dbReference type="Ensembl" id="ENSBTAT00000002387.6">
    <property type="protein sequence ID" value="ENSBTAP00000002387.4"/>
    <property type="gene ID" value="ENSBTAG00000001827.6"/>
</dbReference>
<dbReference type="GeneID" id="505570"/>
<dbReference type="KEGG" id="bta:505570"/>
<dbReference type="CTD" id="54994"/>
<dbReference type="VEuPathDB" id="HostDB:ENSBTAG00000001827"/>
<dbReference type="VGNC" id="VGNC:29353">
    <property type="gene designation" value="GID8"/>
</dbReference>
<dbReference type="eggNOG" id="KOG2659">
    <property type="taxonomic scope" value="Eukaryota"/>
</dbReference>
<dbReference type="GeneTree" id="ENSGT00390000015162"/>
<dbReference type="HOGENOM" id="CLU_073203_1_0_1"/>
<dbReference type="InParanoid" id="Q32L52"/>
<dbReference type="OMA" id="KMILWAQ"/>
<dbReference type="OrthoDB" id="2415936at2759"/>
<dbReference type="TreeFam" id="TF300176"/>
<dbReference type="Reactome" id="R-BTA-9861718">
    <property type="pathway name" value="Regulation of pyruvate metabolism"/>
</dbReference>
<dbReference type="Proteomes" id="UP000009136">
    <property type="component" value="Chromosome 13"/>
</dbReference>
<dbReference type="Bgee" id="ENSBTAG00000001827">
    <property type="expression patterns" value="Expressed in esophagus and 104 other cell types or tissues"/>
</dbReference>
<dbReference type="GO" id="GO:0030054">
    <property type="term" value="C:cell junction"/>
    <property type="evidence" value="ECO:0007669"/>
    <property type="project" value="Ensembl"/>
</dbReference>
<dbReference type="GO" id="GO:0005737">
    <property type="term" value="C:cytoplasm"/>
    <property type="evidence" value="ECO:0000318"/>
    <property type="project" value="GO_Central"/>
</dbReference>
<dbReference type="GO" id="GO:0005829">
    <property type="term" value="C:cytosol"/>
    <property type="evidence" value="ECO:0000250"/>
    <property type="project" value="UniProtKB"/>
</dbReference>
<dbReference type="GO" id="GO:0005654">
    <property type="term" value="C:nucleoplasm"/>
    <property type="evidence" value="ECO:0007669"/>
    <property type="project" value="Ensembl"/>
</dbReference>
<dbReference type="GO" id="GO:0005634">
    <property type="term" value="C:nucleus"/>
    <property type="evidence" value="ECO:0000250"/>
    <property type="project" value="UniProtKB"/>
</dbReference>
<dbReference type="GO" id="GO:0000151">
    <property type="term" value="C:ubiquitin ligase complex"/>
    <property type="evidence" value="ECO:0007669"/>
    <property type="project" value="Ensembl"/>
</dbReference>
<dbReference type="GO" id="GO:0042803">
    <property type="term" value="F:protein homodimerization activity"/>
    <property type="evidence" value="ECO:0007669"/>
    <property type="project" value="Ensembl"/>
</dbReference>
<dbReference type="GO" id="GO:0090263">
    <property type="term" value="P:positive regulation of canonical Wnt signaling pathway"/>
    <property type="evidence" value="ECO:0000250"/>
    <property type="project" value="UniProtKB"/>
</dbReference>
<dbReference type="GO" id="GO:0008284">
    <property type="term" value="P:positive regulation of cell population proliferation"/>
    <property type="evidence" value="ECO:0000250"/>
    <property type="project" value="UniProtKB"/>
</dbReference>
<dbReference type="GO" id="GO:0043161">
    <property type="term" value="P:proteasome-mediated ubiquitin-dependent protein catabolic process"/>
    <property type="evidence" value="ECO:0000318"/>
    <property type="project" value="GO_Central"/>
</dbReference>
<dbReference type="GO" id="GO:0016055">
    <property type="term" value="P:Wnt signaling pathway"/>
    <property type="evidence" value="ECO:0007669"/>
    <property type="project" value="UniProtKB-KW"/>
</dbReference>
<dbReference type="InterPro" id="IPR013144">
    <property type="entry name" value="CRA_dom"/>
</dbReference>
<dbReference type="InterPro" id="IPR024964">
    <property type="entry name" value="CTLH/CRA"/>
</dbReference>
<dbReference type="InterPro" id="IPR006595">
    <property type="entry name" value="CTLH_C"/>
</dbReference>
<dbReference type="InterPro" id="IPR006594">
    <property type="entry name" value="LisH"/>
</dbReference>
<dbReference type="InterPro" id="IPR050618">
    <property type="entry name" value="Ubq-SigPath_Reg"/>
</dbReference>
<dbReference type="PANTHER" id="PTHR12864">
    <property type="entry name" value="RAN BINDING PROTEIN 9-RELATED"/>
    <property type="match status" value="1"/>
</dbReference>
<dbReference type="Pfam" id="PF10607">
    <property type="entry name" value="CTLH"/>
    <property type="match status" value="1"/>
</dbReference>
<dbReference type="Pfam" id="PF08513">
    <property type="entry name" value="LisH"/>
    <property type="match status" value="1"/>
</dbReference>
<dbReference type="SMART" id="SM00757">
    <property type="entry name" value="CRA"/>
    <property type="match status" value="1"/>
</dbReference>
<dbReference type="SMART" id="SM00668">
    <property type="entry name" value="CTLH"/>
    <property type="match status" value="1"/>
</dbReference>
<dbReference type="SMART" id="SM00667">
    <property type="entry name" value="LisH"/>
    <property type="match status" value="1"/>
</dbReference>
<dbReference type="PROSITE" id="PS50897">
    <property type="entry name" value="CTLH"/>
    <property type="match status" value="1"/>
</dbReference>
<dbReference type="PROSITE" id="PS50896">
    <property type="entry name" value="LISH"/>
    <property type="match status" value="1"/>
</dbReference>
<proteinExistence type="evidence at transcript level"/>
<accession>Q32L52</accession>